<evidence type="ECO:0000269" key="1">
    <source>
    </source>
</evidence>
<evidence type="ECO:0000269" key="2">
    <source>
    </source>
</evidence>
<evidence type="ECO:0000269" key="3">
    <source>
    </source>
</evidence>
<evidence type="ECO:0000269" key="4">
    <source>
    </source>
</evidence>
<evidence type="ECO:0000269" key="5">
    <source>
    </source>
</evidence>
<evidence type="ECO:0000303" key="6">
    <source>
    </source>
</evidence>
<evidence type="ECO:0000303" key="7">
    <source>
    </source>
</evidence>
<evidence type="ECO:0000305" key="8"/>
<reference key="1">
    <citation type="journal article" date="2000" name="Nature">
        <title>Complete genome sequence of Pseudomonas aeruginosa PAO1, an opportunistic pathogen.</title>
        <authorList>
            <person name="Stover C.K."/>
            <person name="Pham X.-Q.T."/>
            <person name="Erwin A.L."/>
            <person name="Mizoguchi S.D."/>
            <person name="Warrener P."/>
            <person name="Hickey M.J."/>
            <person name="Brinkman F.S.L."/>
            <person name="Hufnagle W.O."/>
            <person name="Kowalik D.J."/>
            <person name="Lagrou M."/>
            <person name="Garber R.L."/>
            <person name="Goltry L."/>
            <person name="Tolentino E."/>
            <person name="Westbrock-Wadman S."/>
            <person name="Yuan Y."/>
            <person name="Brody L.L."/>
            <person name="Coulter S.N."/>
            <person name="Folger K.R."/>
            <person name="Kas A."/>
            <person name="Larbig K."/>
            <person name="Lim R.M."/>
            <person name="Smith K.A."/>
            <person name="Spencer D.H."/>
            <person name="Wong G.K.-S."/>
            <person name="Wu Z."/>
            <person name="Paulsen I.T."/>
            <person name="Reizer J."/>
            <person name="Saier M.H. Jr."/>
            <person name="Hancock R.E.W."/>
            <person name="Lory S."/>
            <person name="Olson M.V."/>
        </authorList>
    </citation>
    <scope>NUCLEOTIDE SEQUENCE [LARGE SCALE GENOMIC DNA]</scope>
    <source>
        <strain>ATCC 15692 / DSM 22644 / CIP 104116 / JCM 14847 / LMG 12228 / 1C / PRS 101 / PAO1</strain>
    </source>
</reference>
<reference key="2">
    <citation type="journal article" date="2005" name="J. Bacteriol.">
        <title>Functional characterization of WaaL, a ligase associated with linking O-antigen polysaccharide to the core of Pseudomonas aeruginosa lipopolysaccharide.</title>
        <authorList>
            <person name="Abeyrathne P.D."/>
            <person name="Daniels C."/>
            <person name="Poon K.K."/>
            <person name="Matewish M.J."/>
            <person name="Lam J.S."/>
        </authorList>
    </citation>
    <scope>FUNCTION</scope>
    <scope>CATALYTIC ACTIVITY</scope>
    <scope>PATHWAY</scope>
    <scope>DISRUPTION PHENOTYPE</scope>
    <source>
        <strain>ATCC 15692 / DSM 22644 / CIP 104116 / JCM 14847 / LMG 12228 / 1C / PRS 101 / PAO1</strain>
    </source>
</reference>
<reference key="3">
    <citation type="journal article" date="2007" name="Mol. Microbiol.">
        <title>WaaL of Pseudomonas aeruginosa utilizes ATP in in vitro ligation of O antigen onto lipid A-core.</title>
        <authorList>
            <person name="Abeyrathne P.D."/>
            <person name="Lam J.S."/>
        </authorList>
    </citation>
    <scope>FUNCTION</scope>
    <scope>CATALYTIC ACTIVITY</scope>
    <scope>PATHWAY</scope>
    <scope>SUBUNIT</scope>
    <scope>DISRUPTION PHENOTYPE</scope>
    <scope>MUTAGENESIS OF ARG-264; TRP-268; GLY-282; GLY-284 AND HIS-303</scope>
    <source>
        <strain>ATCC 15692 / DSM 22644 / CIP 104116 / JCM 14847 / LMG 12228 / 1C / PRS 101 / PAO1</strain>
    </source>
</reference>
<reference key="4">
    <citation type="journal article" date="2010" name="MBio">
        <title>Membrane topology mapping of the O-antigen flippase (Wzx), polymerase (Wzy), and ligase (WaaL) from Pseudomonas aeruginosa PAO1 reveals novel domain architectures.</title>
        <authorList>
            <person name="Islam S.T."/>
            <person name="Taylor V.L."/>
            <person name="Qi M."/>
            <person name="Lam J.S."/>
        </authorList>
    </citation>
    <scope>SUBCELLULAR LOCATION</scope>
    <scope>TOPOLOGY</scope>
    <source>
        <strain>ATCC 15692 / DSM 22644 / CIP 104116 / JCM 14847 / LMG 12228 / 1C / PRS 101 / PAO1</strain>
    </source>
</reference>
<reference key="5">
    <citation type="journal article" date="2012" name="Glycobiology">
        <title>The WaaL O-antigen lipopolysaccharide ligase has features in common with metal ion-independent inverting glycosyltransferases.</title>
        <authorList>
            <person name="Ruan X."/>
            <person name="Loyola D.E."/>
            <person name="Marolda C.L."/>
            <person name="Perez-Donoso J.M."/>
            <person name="Valvano M.A."/>
        </authorList>
    </citation>
    <scope>ACTIVITY REGULATION</scope>
    <scope>LACK OF ATPASE ACTIVITY</scope>
</reference>
<reference key="6">
    <citation type="journal article" date="2018" name="Mol. Microbiol.">
        <title>Escherichia coli and Pseudomonas aeruginosa lipopolysaccharide O-antigen ligases share similar membrane topology and biochemical properties.</title>
        <authorList>
            <person name="Ruan X."/>
            <person name="Monjaras Feria J."/>
            <person name="Hamad M."/>
            <person name="Valvano M.A."/>
        </authorList>
    </citation>
    <scope>FUNCTION</scope>
    <scope>CATALYTIC ACTIVITY</scope>
    <scope>ACTIVITY REGULATION</scope>
    <scope>LACK OF ATPASE ACTIVITY</scope>
    <scope>SUBCELLULAR LOCATION</scope>
    <scope>TOPOLOGY</scope>
    <source>
        <strain>ATCC 15692 / DSM 22644 / CIP 104116 / JCM 14847 / LMG 12228 / 1C / PRS 101 / PAO1</strain>
    </source>
</reference>
<proteinExistence type="evidence at protein level"/>
<comment type="function">
    <text evidence="1 2 5">Transferase involved in the biosynthesis of the lipopolysaccharide (LPS) (PubMed:15838026, PubMed:17697256, PubMed:30047569). Catalyzes the transfer of a polymerized O-antigen molecule from its polyprenyl diphosphate membrane anchor to a terminal sugar of the lipid A-core oligosaccharide, finalizing the biosynthesis of the lipopolysaccharide (PubMed:15838026, PubMed:17697256, PubMed:30047569). Required for the attachment of both A-band and B-band O-antigens, two forms of O-antigen produced by P.aeruginosa, onto the lipid A-core receptors (PubMed:15838026, PubMed:17697256). Important for cell wall integrity and motility of the bacteria (PubMed:15838026).</text>
</comment>
<comment type="catalytic activity">
    <reaction evidence="1 2 5">
        <text>a lipid-linked O antigen + a lipid A-core oligosaccharide = a lipopolysaccharide + a polyisoprenyl diphosphate.</text>
        <dbReference type="EC" id="2.4.99.26"/>
    </reaction>
</comment>
<comment type="activity regulation">
    <text evidence="4 5">Activity does not require ATP and magnesium ions.</text>
</comment>
<comment type="pathway">
    <text evidence="1 2">Bacterial outer membrane biogenesis; lipopolysaccharide biosynthesis.</text>
</comment>
<comment type="subunit">
    <text evidence="2">Homodimer.</text>
</comment>
<comment type="subcellular location">
    <subcellularLocation>
        <location evidence="3 5">Cell inner membrane</location>
        <topology evidence="3 5">Multi-pass membrane protein</topology>
    </subcellularLocation>
</comment>
<comment type="disruption phenotype">
    <text evidence="1 2">Lipopolysaccharide (LPS) from this mutant is devoid of B-band O-polysaccharides and semirough (PubMed:15838026). The mutant is also deficient in the production of A-band polysaccharide, a homopolymer of D-rhamnose (PubMed:15838026). Mutation drastically affects the swimming and twitching motilities of the bacteria (PubMed:15838026). Reduced number of pili and/or flagella can be observed on the cell surfaces of the mutant bacteria compared to their respective wild-type parent strains (PubMed:15838026). A P.aeruginosa waaL mutant could not be cross-complemented by E.coli waaL, which suggests that each of these proteins has specificity for its cognate core oligosaccharide (PubMed:17697256).</text>
</comment>
<comment type="miscellaneous">
    <text evidence="2 4 5">Was originally reported to have ATPase activity, required for ligation as an energy source (PubMed:17697256). However, it was shown later that ligation occurs without ATP and magnesium ions, and that WaaL cannot catalyze ATP hydrolysis in vitro (PubMed:21983211, PubMed:30047569).</text>
</comment>
<comment type="similarity">
    <text evidence="8">Belongs to the O-antigen ligase family.</text>
</comment>
<name>WAAL_PSEAE</name>
<keyword id="KW-0997">Cell inner membrane</keyword>
<keyword id="KW-1003">Cell membrane</keyword>
<keyword id="KW-0328">Glycosyltransferase</keyword>
<keyword id="KW-0448">Lipopolysaccharide biosynthesis</keyword>
<keyword id="KW-0472">Membrane</keyword>
<keyword id="KW-1185">Reference proteome</keyword>
<keyword id="KW-0808">Transferase</keyword>
<keyword id="KW-0812">Transmembrane</keyword>
<keyword id="KW-1133">Transmembrane helix</keyword>
<organism>
    <name type="scientific">Pseudomonas aeruginosa (strain ATCC 15692 / DSM 22644 / CIP 104116 / JCM 14847 / LMG 12228 / 1C / PRS 101 / PAO1)</name>
    <dbReference type="NCBI Taxonomy" id="208964"/>
    <lineage>
        <taxon>Bacteria</taxon>
        <taxon>Pseudomonadati</taxon>
        <taxon>Pseudomonadota</taxon>
        <taxon>Gammaproteobacteria</taxon>
        <taxon>Pseudomonadales</taxon>
        <taxon>Pseudomonadaceae</taxon>
        <taxon>Pseudomonas</taxon>
    </lineage>
</organism>
<accession>Q9HUG6</accession>
<feature type="chain" id="PRO_0000208068" description="O-antigen ligase">
    <location>
        <begin position="1"/>
        <end position="401"/>
    </location>
</feature>
<feature type="topological domain" description="Cytoplasmic" evidence="3 5">
    <location>
        <begin position="1"/>
        <end position="20"/>
    </location>
</feature>
<feature type="transmembrane region" description="Helical; Name=1" evidence="5">
    <location>
        <begin position="21"/>
        <end position="37"/>
    </location>
</feature>
<feature type="topological domain" description="Periplasmic" evidence="3 5">
    <location>
        <begin position="38"/>
        <end position="42"/>
    </location>
</feature>
<feature type="transmembrane region" description="Helical; Name=2" evidence="5">
    <location>
        <begin position="43"/>
        <end position="61"/>
    </location>
</feature>
<feature type="topological domain" description="Cytoplasmic" evidence="3 5">
    <location>
        <begin position="62"/>
        <end position="72"/>
    </location>
</feature>
<feature type="transmembrane region" description="Helical; Name=3" evidence="5">
    <location>
        <begin position="73"/>
        <end position="92"/>
    </location>
</feature>
<feature type="topological domain" description="Periplasmic" evidence="5">
    <location>
        <begin position="93"/>
        <end position="103"/>
    </location>
</feature>
<feature type="transmembrane region" description="Helical; Name=4" evidence="5">
    <location>
        <begin position="104"/>
        <end position="122"/>
    </location>
</feature>
<feature type="topological domain" description="Cytoplasmic" evidence="5">
    <location>
        <begin position="123"/>
        <end position="129"/>
    </location>
</feature>
<feature type="transmembrane region" description="Helical; Name=5" evidence="5">
    <location>
        <begin position="130"/>
        <end position="150"/>
    </location>
</feature>
<feature type="topological domain" description="Periplasmic" evidence="5">
    <location>
        <begin position="151"/>
        <end position="161"/>
    </location>
</feature>
<feature type="transmembrane region" description="Helical; Name=6" evidence="5">
    <location>
        <begin position="162"/>
        <end position="183"/>
    </location>
</feature>
<feature type="topological domain" description="Cytoplasmic" evidence="5">
    <location>
        <begin position="184"/>
        <end position="189"/>
    </location>
</feature>
<feature type="transmembrane region" description="Helical; Name=7" evidence="5">
    <location>
        <begin position="190"/>
        <end position="208"/>
    </location>
</feature>
<feature type="topological domain" description="Periplasmic" evidence="5">
    <location>
        <begin position="209"/>
        <end position="212"/>
    </location>
</feature>
<feature type="transmembrane region" description="Helical; Name=8" evidence="5">
    <location>
        <begin position="213"/>
        <end position="229"/>
    </location>
</feature>
<feature type="topological domain" description="Cytoplasmic" evidence="5">
    <location>
        <begin position="230"/>
        <end position="234"/>
    </location>
</feature>
<feature type="transmembrane region" description="Helical; Name=9" evidence="5">
    <location>
        <begin position="235"/>
        <end position="252"/>
    </location>
</feature>
<feature type="topological domain" description="Periplasmic" evidence="5">
    <location>
        <begin position="253"/>
        <end position="306"/>
    </location>
</feature>
<feature type="transmembrane region" description="Helical; Name=10" evidence="5">
    <location>
        <begin position="307"/>
        <end position="331"/>
    </location>
</feature>
<feature type="topological domain" description="Cytoplasmic" evidence="3 5">
    <location>
        <begin position="332"/>
        <end position="339"/>
    </location>
</feature>
<feature type="transmembrane region" description="Helical; Name=11" evidence="5">
    <location>
        <begin position="340"/>
        <end position="357"/>
    </location>
</feature>
<feature type="topological domain" description="Periplasmic" evidence="3 5">
    <location>
        <begin position="358"/>
        <end position="368"/>
    </location>
</feature>
<feature type="transmembrane region" description="Helical; Name=12" evidence="5">
    <location>
        <begin position="369"/>
        <end position="385"/>
    </location>
</feature>
<feature type="topological domain" description="Cytoplasmic" evidence="3 5">
    <location>
        <begin position="386"/>
        <end position="401"/>
    </location>
</feature>
<feature type="region of interest" description="WZY-C">
    <location>
        <begin position="258"/>
        <end position="319"/>
    </location>
</feature>
<feature type="mutagenesis site" description="No effect on activity. Can complement a knockout mutant." evidence="2">
    <original>R</original>
    <variation>A</variation>
    <location>
        <position position="264"/>
    </location>
</feature>
<feature type="mutagenesis site" description="No effect on activity. Can complement a knockout mutant." evidence="2">
    <original>W</original>
    <variation>A</variation>
    <location>
        <position position="268"/>
    </location>
</feature>
<feature type="mutagenesis site" description="No effect on activity. Can complement a knockout mutant." evidence="2">
    <original>G</original>
    <variation>A</variation>
    <location>
        <position position="282"/>
    </location>
</feature>
<feature type="mutagenesis site" description="No effect on activity. Can complement a knockout mutant." evidence="2">
    <original>G</original>
    <variation>A</variation>
    <location>
        <position position="284"/>
    </location>
</feature>
<feature type="mutagenesis site" description="Loss of activity." evidence="2">
    <original>H</original>
    <variation>A</variation>
    <variation>G</variation>
    <variation>N</variation>
    <location>
        <position position="303"/>
    </location>
</feature>
<feature type="mutagenesis site" description="No effect on activity. Can complement a knockout mutant." evidence="2">
    <original>H</original>
    <variation>R</variation>
    <location>
        <position position="303"/>
    </location>
</feature>
<dbReference type="EC" id="2.4.99.26" evidence="1 2 5"/>
<dbReference type="EMBL" id="AE004091">
    <property type="protein sequence ID" value="AAG08384.1"/>
    <property type="molecule type" value="Genomic_DNA"/>
</dbReference>
<dbReference type="PIR" id="D83022">
    <property type="entry name" value="D83022"/>
</dbReference>
<dbReference type="RefSeq" id="NP_253686.1">
    <property type="nucleotide sequence ID" value="NC_002516.2"/>
</dbReference>
<dbReference type="RefSeq" id="WP_003114546.1">
    <property type="nucleotide sequence ID" value="NZ_QZGE01000002.1"/>
</dbReference>
<dbReference type="SMR" id="Q9HUG6"/>
<dbReference type="STRING" id="208964.PA4999"/>
<dbReference type="PaxDb" id="208964-PA4999"/>
<dbReference type="GeneID" id="881661"/>
<dbReference type="KEGG" id="pae:PA4999"/>
<dbReference type="PATRIC" id="fig|208964.12.peg.5239"/>
<dbReference type="PseudoCAP" id="PA4999"/>
<dbReference type="HOGENOM" id="CLU_055393_0_0_6"/>
<dbReference type="InParanoid" id="Q9HUG6"/>
<dbReference type="OrthoDB" id="8534453at2"/>
<dbReference type="BioCyc" id="PAER208964:G1FZ6-5115-MONOMER"/>
<dbReference type="UniPathway" id="UPA00030"/>
<dbReference type="Proteomes" id="UP000002438">
    <property type="component" value="Chromosome"/>
</dbReference>
<dbReference type="GO" id="GO:0098567">
    <property type="term" value="C:periplasmic side of plasma membrane"/>
    <property type="evidence" value="ECO:0000314"/>
    <property type="project" value="PseudoCAP"/>
</dbReference>
<dbReference type="GO" id="GO:0005886">
    <property type="term" value="C:plasma membrane"/>
    <property type="evidence" value="ECO:0000314"/>
    <property type="project" value="PseudoCAP"/>
</dbReference>
<dbReference type="GO" id="GO:0016757">
    <property type="term" value="F:glycosyltransferase activity"/>
    <property type="evidence" value="ECO:0000314"/>
    <property type="project" value="PseudoCAP"/>
</dbReference>
<dbReference type="GO" id="GO:0016874">
    <property type="term" value="F:ligase activity"/>
    <property type="evidence" value="ECO:0000314"/>
    <property type="project" value="PseudoCAP"/>
</dbReference>
<dbReference type="GO" id="GO:0008754">
    <property type="term" value="F:O-antigen ligase activity"/>
    <property type="evidence" value="ECO:0000315"/>
    <property type="project" value="PseudoCAP"/>
</dbReference>
<dbReference type="GO" id="GO:0044780">
    <property type="term" value="P:bacterial-type flagellum assembly"/>
    <property type="evidence" value="ECO:0000315"/>
    <property type="project" value="PseudoCAP"/>
</dbReference>
<dbReference type="GO" id="GO:0071977">
    <property type="term" value="P:bacterial-type flagellum-dependent swimming motility"/>
    <property type="evidence" value="ECO:0000315"/>
    <property type="project" value="PseudoCAP"/>
</dbReference>
<dbReference type="GO" id="GO:0009244">
    <property type="term" value="P:lipopolysaccharide core region biosynthetic process"/>
    <property type="evidence" value="ECO:0007669"/>
    <property type="project" value="UniProtKB-UniPathway"/>
</dbReference>
<dbReference type="GO" id="GO:0009243">
    <property type="term" value="P:O antigen biosynthetic process"/>
    <property type="evidence" value="ECO:0000315"/>
    <property type="project" value="PseudoCAP"/>
</dbReference>
<dbReference type="GO" id="GO:0009297">
    <property type="term" value="P:pilus assembly"/>
    <property type="evidence" value="ECO:0000315"/>
    <property type="project" value="PseudoCAP"/>
</dbReference>
<dbReference type="GO" id="GO:0043107">
    <property type="term" value="P:type IV pilus-dependent motility"/>
    <property type="evidence" value="ECO:0000315"/>
    <property type="project" value="PseudoCAP"/>
</dbReference>
<dbReference type="InterPro" id="IPR007016">
    <property type="entry name" value="O-antigen_ligase-rel_domated"/>
</dbReference>
<dbReference type="InterPro" id="IPR051533">
    <property type="entry name" value="WaaL-like"/>
</dbReference>
<dbReference type="PANTHER" id="PTHR37422:SF13">
    <property type="entry name" value="LIPOPOLYSACCHARIDE BIOSYNTHESIS PROTEIN PA4999-RELATED"/>
    <property type="match status" value="1"/>
</dbReference>
<dbReference type="PANTHER" id="PTHR37422">
    <property type="entry name" value="TEICHURONIC ACID BIOSYNTHESIS PROTEIN TUAE"/>
    <property type="match status" value="1"/>
</dbReference>
<dbReference type="Pfam" id="PF04932">
    <property type="entry name" value="Wzy_C"/>
    <property type="match status" value="1"/>
</dbReference>
<sequence>MFAATRLSRLRHDTSRILSHWILPLGWLALLTGMFWVGDRSDYHRLFYILLAAPTLLYVILQPRLLRPLTGSPLFIAFLAFSSYMMLSLSWSTPENSTGSLLKRPLYIALLFFCAAILALEAPLRLKTATWLAALGAVISAAATLLRYYWDANPLRLTGYGALYNPLLSAHVYGAFTALWLAYWMQSRPILAPLPLISLALLGGLLIATGSRTPLVGLTAALMWLVLAGDRKKALIALALALAGALLGYILYPEVITQRGASFRPEIWADALRQISEHPWLGHGYDHPMRIVLSNGMLLADPHNIELGVLFAGGIIGLLLWVAIYALAFGFSWKNRKSPAVLLASTWLVFGLAAGLTEGNAFLPRPKEHWFLIWIPMALLYALWIQQRFAASRRGEDIAAP</sequence>
<protein>
    <recommendedName>
        <fullName evidence="6">O-antigen ligase</fullName>
        <shortName evidence="7">O-Ag ligase</shortName>
        <ecNumber evidence="1 2 5">2.4.99.26</ecNumber>
    </recommendedName>
</protein>
<gene>
    <name evidence="6" type="primary">waaL</name>
    <name type="ordered locus">PA4999</name>
</gene>